<organism>
    <name type="scientific">Escherichia coli (strain 55989 / EAEC)</name>
    <dbReference type="NCBI Taxonomy" id="585055"/>
    <lineage>
        <taxon>Bacteria</taxon>
        <taxon>Pseudomonadati</taxon>
        <taxon>Pseudomonadota</taxon>
        <taxon>Gammaproteobacteria</taxon>
        <taxon>Enterobacterales</taxon>
        <taxon>Enterobacteriaceae</taxon>
        <taxon>Escherichia</taxon>
    </lineage>
</organism>
<name>CITX_ECO55</name>
<sequence length="183" mass="20270">MHLLPELASHHAVSIPELLVSRDERQARQHVWLKRHPVPLVSFTVVAPGPIKDSEVTRRIFNHGVTALRALAAKQGWQIQEQAALVSASGPEGMLSIAAPARDLKLATIELEHSHPLGRLWDIDVLTPEGEILSRRDYSLPPRRCLLCEQSAAVCARGKTHQLTDLLNRMEALLNDVDACNVN</sequence>
<accession>B7L8J7</accession>
<reference key="1">
    <citation type="journal article" date="2009" name="PLoS Genet.">
        <title>Organised genome dynamics in the Escherichia coli species results in highly diverse adaptive paths.</title>
        <authorList>
            <person name="Touchon M."/>
            <person name="Hoede C."/>
            <person name="Tenaillon O."/>
            <person name="Barbe V."/>
            <person name="Baeriswyl S."/>
            <person name="Bidet P."/>
            <person name="Bingen E."/>
            <person name="Bonacorsi S."/>
            <person name="Bouchier C."/>
            <person name="Bouvet O."/>
            <person name="Calteau A."/>
            <person name="Chiapello H."/>
            <person name="Clermont O."/>
            <person name="Cruveiller S."/>
            <person name="Danchin A."/>
            <person name="Diard M."/>
            <person name="Dossat C."/>
            <person name="Karoui M.E."/>
            <person name="Frapy E."/>
            <person name="Garry L."/>
            <person name="Ghigo J.M."/>
            <person name="Gilles A.M."/>
            <person name="Johnson J."/>
            <person name="Le Bouguenec C."/>
            <person name="Lescat M."/>
            <person name="Mangenot S."/>
            <person name="Martinez-Jehanne V."/>
            <person name="Matic I."/>
            <person name="Nassif X."/>
            <person name="Oztas S."/>
            <person name="Petit M.A."/>
            <person name="Pichon C."/>
            <person name="Rouy Z."/>
            <person name="Ruf C.S."/>
            <person name="Schneider D."/>
            <person name="Tourret J."/>
            <person name="Vacherie B."/>
            <person name="Vallenet D."/>
            <person name="Medigue C."/>
            <person name="Rocha E.P.C."/>
            <person name="Denamur E."/>
        </authorList>
    </citation>
    <scope>NUCLEOTIDE SEQUENCE [LARGE SCALE GENOMIC DNA]</scope>
    <source>
        <strain>55989 / EAEC</strain>
    </source>
</reference>
<gene>
    <name evidence="1" type="primary">citX</name>
    <name type="ordered locus">EC55989_0606</name>
</gene>
<keyword id="KW-0548">Nucleotidyltransferase</keyword>
<keyword id="KW-1185">Reference proteome</keyword>
<keyword id="KW-0808">Transferase</keyword>
<comment type="function">
    <text evidence="1">Transfers 2-(5''-triphosphoribosyl)-3'-dephosphocoenzyme-A on a serine residue to the apo-acyl carrier protein (gamma chain) of the citrate lyase to yield holo-acyl carrier protein.</text>
</comment>
<comment type="catalytic activity">
    <reaction evidence="1">
        <text>apo-[citrate lyase ACP] + 2'-(5''-triphospho-alpha-D-ribosyl)-3'-dephospho-CoA = holo-[citrate lyase ACP] + diphosphate</text>
        <dbReference type="Rhea" id="RHEA:16333"/>
        <dbReference type="Rhea" id="RHEA-COMP:10157"/>
        <dbReference type="Rhea" id="RHEA-COMP:10158"/>
        <dbReference type="ChEBI" id="CHEBI:29999"/>
        <dbReference type="ChEBI" id="CHEBI:33019"/>
        <dbReference type="ChEBI" id="CHEBI:61378"/>
        <dbReference type="ChEBI" id="CHEBI:82683"/>
        <dbReference type="EC" id="2.7.7.61"/>
    </reaction>
</comment>
<comment type="similarity">
    <text evidence="1">Belongs to the CitX family.</text>
</comment>
<protein>
    <recommendedName>
        <fullName evidence="1">Probable apo-citrate lyase phosphoribosyl-dephospho-CoA transferase</fullName>
        <ecNumber evidence="1">2.7.7.61</ecNumber>
    </recommendedName>
    <alternativeName>
        <fullName evidence="1">Apo-ACP nucleodityltransferase</fullName>
    </alternativeName>
    <alternativeName>
        <fullName evidence="1">Holo-ACP synthase</fullName>
    </alternativeName>
    <alternativeName>
        <fullName evidence="1">Holo-citrate lyase synthase</fullName>
    </alternativeName>
</protein>
<dbReference type="EC" id="2.7.7.61" evidence="1"/>
<dbReference type="EMBL" id="CU928145">
    <property type="protein sequence ID" value="CAU96479.1"/>
    <property type="molecule type" value="Genomic_DNA"/>
</dbReference>
<dbReference type="RefSeq" id="WP_000550422.1">
    <property type="nucleotide sequence ID" value="NC_011748.1"/>
</dbReference>
<dbReference type="SMR" id="B7L8J7"/>
<dbReference type="GeneID" id="93776871"/>
<dbReference type="KEGG" id="eck:EC55989_0606"/>
<dbReference type="HOGENOM" id="CLU_104529_1_1_6"/>
<dbReference type="Proteomes" id="UP000000746">
    <property type="component" value="Chromosome"/>
</dbReference>
<dbReference type="GO" id="GO:0050519">
    <property type="term" value="F:holo-citrate lyase synthase activity"/>
    <property type="evidence" value="ECO:0007669"/>
    <property type="project" value="UniProtKB-UniRule"/>
</dbReference>
<dbReference type="GO" id="GO:0051191">
    <property type="term" value="P:prosthetic group biosynthetic process"/>
    <property type="evidence" value="ECO:0007669"/>
    <property type="project" value="InterPro"/>
</dbReference>
<dbReference type="HAMAP" id="MF_00398">
    <property type="entry name" value="CitX"/>
    <property type="match status" value="1"/>
</dbReference>
<dbReference type="InterPro" id="IPR005551">
    <property type="entry name" value="CitX"/>
</dbReference>
<dbReference type="NCBIfam" id="TIGR03124">
    <property type="entry name" value="citrate_citX"/>
    <property type="match status" value="1"/>
</dbReference>
<dbReference type="NCBIfam" id="NF002383">
    <property type="entry name" value="PRK01392.1"/>
    <property type="match status" value="1"/>
</dbReference>
<dbReference type="Pfam" id="PF03802">
    <property type="entry name" value="CitX"/>
    <property type="match status" value="1"/>
</dbReference>
<evidence type="ECO:0000255" key="1">
    <source>
        <dbReference type="HAMAP-Rule" id="MF_00398"/>
    </source>
</evidence>
<feature type="chain" id="PRO_1000189598" description="Probable apo-citrate lyase phosphoribosyl-dephospho-CoA transferase">
    <location>
        <begin position="1"/>
        <end position="183"/>
    </location>
</feature>
<proteinExistence type="inferred from homology"/>